<comment type="catalytic activity">
    <reaction>
        <text>(2R,3R)-tartrate = oxaloacetate + H2O</text>
        <dbReference type="Rhea" id="RHEA:15413"/>
        <dbReference type="ChEBI" id="CHEBI:15377"/>
        <dbReference type="ChEBI" id="CHEBI:16452"/>
        <dbReference type="ChEBI" id="CHEBI:30924"/>
        <dbReference type="EC" id="4.2.1.32"/>
    </reaction>
</comment>
<comment type="subunit">
    <text evidence="2">Heterotetramer of two alpha and two beta subunits.</text>
</comment>
<comment type="similarity">
    <text evidence="2">Belongs to the class-I fumarase family.</text>
</comment>
<gene>
    <name type="primary">ttdB</name>
    <name type="ordered locus">SF3103</name>
    <name type="ordered locus">S3308</name>
</gene>
<feature type="chain" id="PRO_0000195667" description="L(+)-tartrate dehydratase subunit beta">
    <location>
        <begin position="1"/>
        <end position="201"/>
    </location>
</feature>
<feature type="active site" evidence="1">
    <location>
        <position position="37"/>
    </location>
</feature>
<keyword id="KW-0456">Lyase</keyword>
<keyword id="KW-1185">Reference proteome</keyword>
<dbReference type="EC" id="4.2.1.32"/>
<dbReference type="EMBL" id="AE005674">
    <property type="protein sequence ID" value="AAN44579.1"/>
    <property type="molecule type" value="Genomic_DNA"/>
</dbReference>
<dbReference type="EMBL" id="AE014073">
    <property type="protein sequence ID" value="AAP18391.1"/>
    <property type="molecule type" value="Genomic_DNA"/>
</dbReference>
<dbReference type="RefSeq" id="NP_708872.1">
    <property type="nucleotide sequence ID" value="NC_004337.2"/>
</dbReference>
<dbReference type="RefSeq" id="WP_000722957.1">
    <property type="nucleotide sequence ID" value="NZ_WPGW01000061.1"/>
</dbReference>
<dbReference type="SMR" id="P0AC37"/>
<dbReference type="STRING" id="198214.SF3103"/>
<dbReference type="PaxDb" id="198214-SF3103"/>
<dbReference type="GeneID" id="1023469"/>
<dbReference type="GeneID" id="86861212"/>
<dbReference type="KEGG" id="sfl:SF3103"/>
<dbReference type="KEGG" id="sfx:S3308"/>
<dbReference type="PATRIC" id="fig|198214.7.peg.3682"/>
<dbReference type="HOGENOM" id="CLU_098588_0_0_6"/>
<dbReference type="Proteomes" id="UP000001006">
    <property type="component" value="Chromosome"/>
</dbReference>
<dbReference type="Proteomes" id="UP000002673">
    <property type="component" value="Chromosome"/>
</dbReference>
<dbReference type="GO" id="GO:0008730">
    <property type="term" value="F:L(+)-tartrate dehydratase activity"/>
    <property type="evidence" value="ECO:0007669"/>
    <property type="project" value="UniProtKB-EC"/>
</dbReference>
<dbReference type="FunFam" id="3.20.130.10:FF:000002">
    <property type="entry name" value="L(+)-tartrate dehydratase subunit beta"/>
    <property type="match status" value="1"/>
</dbReference>
<dbReference type="Gene3D" id="3.20.130.10">
    <property type="entry name" value="Fe-S hydro-lyase, tartrate dehydratase beta-type, catalytic domain"/>
    <property type="match status" value="1"/>
</dbReference>
<dbReference type="InterPro" id="IPR004647">
    <property type="entry name" value="Fe-S_hydro-lyase_TtdB-typ_cat"/>
</dbReference>
<dbReference type="InterPro" id="IPR036660">
    <property type="entry name" value="Fe-S_hydroAse_TtdB_cat_sf"/>
</dbReference>
<dbReference type="NCBIfam" id="NF006082">
    <property type="entry name" value="PRK08228.1"/>
    <property type="match status" value="1"/>
</dbReference>
<dbReference type="NCBIfam" id="TIGR00723">
    <property type="entry name" value="ttdB_fumA_fumB"/>
    <property type="match status" value="1"/>
</dbReference>
<dbReference type="PANTHER" id="PTHR43351">
    <property type="entry name" value="L(+)-TARTRATE DEHYDRATASE SUBUNIT BETA"/>
    <property type="match status" value="1"/>
</dbReference>
<dbReference type="PANTHER" id="PTHR43351:SF3">
    <property type="entry name" value="L(+)-TARTRATE DEHYDRATASE SUBUNIT BETA"/>
    <property type="match status" value="1"/>
</dbReference>
<dbReference type="Pfam" id="PF05683">
    <property type="entry name" value="Fumerase_C"/>
    <property type="match status" value="1"/>
</dbReference>
<dbReference type="SUPFAM" id="SSF117457">
    <property type="entry name" value="FumA C-terminal domain-like"/>
    <property type="match status" value="1"/>
</dbReference>
<reference key="1">
    <citation type="journal article" date="2002" name="Nucleic Acids Res.">
        <title>Genome sequence of Shigella flexneri 2a: insights into pathogenicity through comparison with genomes of Escherichia coli K12 and O157.</title>
        <authorList>
            <person name="Jin Q."/>
            <person name="Yuan Z."/>
            <person name="Xu J."/>
            <person name="Wang Y."/>
            <person name="Shen Y."/>
            <person name="Lu W."/>
            <person name="Wang J."/>
            <person name="Liu H."/>
            <person name="Yang J."/>
            <person name="Yang F."/>
            <person name="Zhang X."/>
            <person name="Zhang J."/>
            <person name="Yang G."/>
            <person name="Wu H."/>
            <person name="Qu D."/>
            <person name="Dong J."/>
            <person name="Sun L."/>
            <person name="Xue Y."/>
            <person name="Zhao A."/>
            <person name="Gao Y."/>
            <person name="Zhu J."/>
            <person name="Kan B."/>
            <person name="Ding K."/>
            <person name="Chen S."/>
            <person name="Cheng H."/>
            <person name="Yao Z."/>
            <person name="He B."/>
            <person name="Chen R."/>
            <person name="Ma D."/>
            <person name="Qiang B."/>
            <person name="Wen Y."/>
            <person name="Hou Y."/>
            <person name="Yu J."/>
        </authorList>
    </citation>
    <scope>NUCLEOTIDE SEQUENCE [LARGE SCALE GENOMIC DNA]</scope>
    <source>
        <strain>301 / Serotype 2a</strain>
    </source>
</reference>
<reference key="2">
    <citation type="journal article" date="2003" name="Infect. Immun.">
        <title>Complete genome sequence and comparative genomics of Shigella flexneri serotype 2a strain 2457T.</title>
        <authorList>
            <person name="Wei J."/>
            <person name="Goldberg M.B."/>
            <person name="Burland V."/>
            <person name="Venkatesan M.M."/>
            <person name="Deng W."/>
            <person name="Fournier G."/>
            <person name="Mayhew G.F."/>
            <person name="Plunkett G. III"/>
            <person name="Rose D.J."/>
            <person name="Darling A."/>
            <person name="Mau B."/>
            <person name="Perna N.T."/>
            <person name="Payne S.M."/>
            <person name="Runyen-Janecky L.J."/>
            <person name="Zhou S."/>
            <person name="Schwartz D.C."/>
            <person name="Blattner F.R."/>
        </authorList>
    </citation>
    <scope>NUCLEOTIDE SEQUENCE [LARGE SCALE GENOMIC DNA]</scope>
    <source>
        <strain>ATCC 700930 / 2457T / Serotype 2a</strain>
    </source>
</reference>
<name>TTDB_SHIFL</name>
<protein>
    <recommendedName>
        <fullName>L(+)-tartrate dehydratase subunit beta</fullName>
        <shortName>L-TTD beta</shortName>
        <ecNumber>4.2.1.32</ecNumber>
    </recommendedName>
</protein>
<organism>
    <name type="scientific">Shigella flexneri</name>
    <dbReference type="NCBI Taxonomy" id="623"/>
    <lineage>
        <taxon>Bacteria</taxon>
        <taxon>Pseudomonadati</taxon>
        <taxon>Pseudomonadota</taxon>
        <taxon>Gammaproteobacteria</taxon>
        <taxon>Enterobacterales</taxon>
        <taxon>Enterobacteriaceae</taxon>
        <taxon>Shigella</taxon>
    </lineage>
</organism>
<proteinExistence type="inferred from homology"/>
<sequence>MKKILTTPIKAEDLQDIRVGDVIYLTGTLVTCRDVCHRRLIELKRPIPYDLNGKAIFHAGPIVRKNGDKWEMVSVGPTTSMRMESFEREFIEQTGVKLVVGKGGMGPLTEEGCQKFKALHVIFPAGCAVLAATQVEEIEEVHWTELGMPESLWVCRVKEFGPLIVSIDTHGNNLIAENKKLFAERRDPIVEEICEHVHYIK</sequence>
<accession>P0AC37</accession>
<accession>P05851</accession>
<accession>P33131</accession>
<evidence type="ECO:0000255" key="1"/>
<evidence type="ECO:0000305" key="2"/>